<protein>
    <recommendedName>
        <fullName>Methyl-CpG-binding domain protein 5</fullName>
    </recommendedName>
    <alternativeName>
        <fullName>Methyl-CpG-binding protein MBD5</fullName>
    </alternativeName>
</protein>
<reference key="1">
    <citation type="journal article" date="2009" name="PLoS Biol.">
        <title>Lineage-specific biology revealed by a finished genome assembly of the mouse.</title>
        <authorList>
            <person name="Church D.M."/>
            <person name="Goodstadt L."/>
            <person name="Hillier L.W."/>
            <person name="Zody M.C."/>
            <person name="Goldstein S."/>
            <person name="She X."/>
            <person name="Bult C.J."/>
            <person name="Agarwala R."/>
            <person name="Cherry J.L."/>
            <person name="DiCuccio M."/>
            <person name="Hlavina W."/>
            <person name="Kapustin Y."/>
            <person name="Meric P."/>
            <person name="Maglott D."/>
            <person name="Birtle Z."/>
            <person name="Marques A.C."/>
            <person name="Graves T."/>
            <person name="Zhou S."/>
            <person name="Teague B."/>
            <person name="Potamousis K."/>
            <person name="Churas C."/>
            <person name="Place M."/>
            <person name="Herschleb J."/>
            <person name="Runnheim R."/>
            <person name="Forrest D."/>
            <person name="Amos-Landgraf J."/>
            <person name="Schwartz D.C."/>
            <person name="Cheng Z."/>
            <person name="Lindblad-Toh K."/>
            <person name="Eichler E.E."/>
            <person name="Ponting C.P."/>
        </authorList>
    </citation>
    <scope>NUCLEOTIDE SEQUENCE [LARGE SCALE GENOMIC DNA]</scope>
    <source>
        <strain>C57BL/6J</strain>
    </source>
</reference>
<reference key="2">
    <citation type="journal article" date="2004" name="Genome Res.">
        <title>The status, quality, and expansion of the NIH full-length cDNA project: the Mammalian Gene Collection (MGC).</title>
        <authorList>
            <consortium name="The MGC Project Team"/>
        </authorList>
    </citation>
    <scope>NUCLEOTIDE SEQUENCE [LARGE SCALE MRNA]</scope>
    <source>
        <tissue>Brain</tissue>
    </source>
</reference>
<reference key="3">
    <citation type="journal article" date="2010" name="PLoS ONE">
        <title>The human proteins MBD5 and MBD6 associate with heterochromatin but they do not bind methylated DNA.</title>
        <authorList>
            <person name="Laget S."/>
            <person name="Joulie M."/>
            <person name="Le Masson F."/>
            <person name="Sasai N."/>
            <person name="Christians E."/>
            <person name="Pradhan S."/>
            <person name="Roberts R.J."/>
            <person name="Defossez P.A."/>
        </authorList>
    </citation>
    <scope>TISSUE SPECIFICITY</scope>
    <scope>DEVELOPMENTAL STAGE</scope>
</reference>
<sequence length="1498" mass="160292">MNGGKECDGGDKEGGLAAIQVPVGWQRRVDHNGVLYISPSGSLLSCLDQVKTYLLTDGTCKCGLECPLILPKVFNFDPGAAVKQRTAEDVKADDDVTKLCIHKRKIIAVATLHQSMEAPHPSLVLTSPGGGTNATPVVPSRAATPRSVRNKSHEGITNSVMPECKNPFKLMTGSSNAMGRLYMQDLPGSQQQELHPVYPRQRLGSSEHGQKSPFRGSHGGLPSPASSGSQIYGDGSISPRTDPLGSPDVFTRNNPGFHGAPNSSPIHLNRTPLSPPSVMLHGSPVQSSCAMAGRTNIPLSPTLTTKSPVMKKPMCNFSTNMEIPRAMFHHKPPQGPPPPPPPSCALQKKPLTSEKDPLGILDPIPSKPVNQNPIIINPTSFHSNVHSQVPVMNVSMPPAVVPLPSNLPLPTVKPGHMNHGSHVQRIQHSASTSLSPSPVTSPVHMMGTGIGRIEASPQRSRSSSTSSDHGNFMMPPVGPQATCSGIKVPPRSPRSTIGSPRPSMPSSPSTKSDGHHQYKDIPNPLIAGMSNVLNTPSSAAFPTAPAGNGSVKSQPGLLGMPLNQILNQHNAASFPASSLLSAAAKAQLANQNKLAGNNSSSSNNSGAVASSGNTEGHSTLNTMFPPTANMLLPTGEGQSGRAALRDKLMSQQKDSLRKRKQPPTTVLSLLRQSQMDSSAAPKPGPDLLRKHGQGSFPISSMSQLLQSMSCQSSHLSSNSTPGCGGSNTALPCSANQLHFPDPNMNSTVLQNSLTQSIPLRGEAVHCHNANTNFVHSNSPVPNHHLAGLINQIQASGNCGMLSQSGMALGNSLHPNPPQSRISTSSTPVIPNSIVSSYNQTSSEAGGSSLPSSIAIAGSNHPAITKTTSVLQDGVIVTTAAGNPLQSQLPIGSDFPFVGQEHALHFPSNSTANNHLPHPLNPSLLSSLPISLPVNQQHLLNQNLLNILQPSAGEGDISSINNSLNNHQLTHLQSLLNSNQMFPPNQQPQQHLLQGHQNLQAFQGQPTVPCPANNNPMACLFQNFQVRMQGDAALLNKRISTQPGLTTLPENPNLALPHFQDTPCELQPRIDLGQPMKDGLVMGGQGDASVDAIYKAVVDAASKGMQVVITTAVNSTTQISPIPALSAMSAFTASIGDPLNLSSAVSAVIHGRNMGGVDHDGRLRNARGARLPKNIDHGKNSSEGDGFECFKSASCHTSRKQWDGEQSPRGERNRWKYEEFLDHPGHIHSSPCHERPNNVSTLPFLAGEQHPILLPPRNCQGDKILEENFRYNNYKRTMMSFKERLESTVERCTHINGNRPRQSRGFGELLGTAKQDLVLEGQSPGSSNSLESSLVKDYIHYNGDFNAKTINGCVPSPSDAKSISSEDDLRNPDSPSSHELIHYRPRTFNVGDLVWGQIKGLTSWPGKFIREDDVHNSCQQSPEEGKVEPEKLKTLTEGLEAYSRVRKRSRKSGKLNNHLEAAIHEAMSELDKMSGTVHQIPQGDRQMRPPKPKRRKISR</sequence>
<accession>B1AYB6</accession>
<accession>B1AYB7</accession>
<keyword id="KW-0025">Alternative splicing</keyword>
<keyword id="KW-0158">Chromosome</keyword>
<keyword id="KW-0539">Nucleus</keyword>
<keyword id="KW-1185">Reference proteome</keyword>
<keyword id="KW-0833">Ubl conjugation pathway</keyword>
<name>MBD5_MOUSE</name>
<gene>
    <name type="primary">Mbd5</name>
</gene>
<organism>
    <name type="scientific">Mus musculus</name>
    <name type="common">Mouse</name>
    <dbReference type="NCBI Taxonomy" id="10090"/>
    <lineage>
        <taxon>Eukaryota</taxon>
        <taxon>Metazoa</taxon>
        <taxon>Chordata</taxon>
        <taxon>Craniata</taxon>
        <taxon>Vertebrata</taxon>
        <taxon>Euteleostomi</taxon>
        <taxon>Mammalia</taxon>
        <taxon>Eutheria</taxon>
        <taxon>Euarchontoglires</taxon>
        <taxon>Glires</taxon>
        <taxon>Rodentia</taxon>
        <taxon>Myomorpha</taxon>
        <taxon>Muroidea</taxon>
        <taxon>Muridae</taxon>
        <taxon>Murinae</taxon>
        <taxon>Mus</taxon>
        <taxon>Mus</taxon>
    </lineage>
</organism>
<evidence type="ECO:0000250" key="1">
    <source>
        <dbReference type="UniProtKB" id="Q9P267"/>
    </source>
</evidence>
<evidence type="ECO:0000255" key="2">
    <source>
        <dbReference type="PROSITE-ProRule" id="PRU00162"/>
    </source>
</evidence>
<evidence type="ECO:0000255" key="3">
    <source>
        <dbReference type="PROSITE-ProRule" id="PRU00338"/>
    </source>
</evidence>
<evidence type="ECO:0000256" key="4">
    <source>
        <dbReference type="SAM" id="MobiDB-lite"/>
    </source>
</evidence>
<evidence type="ECO:0000269" key="5">
    <source>
    </source>
</evidence>
<evidence type="ECO:0000305" key="6"/>
<evidence type="ECO:0000305" key="7">
    <source>
    </source>
</evidence>
<dbReference type="EMBL" id="AL845298">
    <property type="status" value="NOT_ANNOTATED_CDS"/>
    <property type="molecule type" value="Genomic_DNA"/>
</dbReference>
<dbReference type="EMBL" id="BX546465">
    <property type="status" value="NOT_ANNOTATED_CDS"/>
    <property type="molecule type" value="Genomic_DNA"/>
</dbReference>
<dbReference type="EMBL" id="BC138375">
    <property type="protein sequence ID" value="AAI38376.1"/>
    <property type="molecule type" value="mRNA"/>
</dbReference>
<dbReference type="EMBL" id="BC138378">
    <property type="protein sequence ID" value="AAI38379.1"/>
    <property type="molecule type" value="mRNA"/>
</dbReference>
<dbReference type="CCDS" id="CCDS71051.1">
    <molecule id="B1AYB6-1"/>
</dbReference>
<dbReference type="RefSeq" id="NP_001277585.1">
    <molecule id="B1AYB6-1"/>
    <property type="nucleotide sequence ID" value="NM_001290656.1"/>
</dbReference>
<dbReference type="RefSeq" id="XP_017170404.1">
    <property type="nucleotide sequence ID" value="XM_017314915.1"/>
</dbReference>
<dbReference type="RefSeq" id="XP_030102495.1">
    <molecule id="B1AYB6-1"/>
    <property type="nucleotide sequence ID" value="XM_030246635.2"/>
</dbReference>
<dbReference type="RefSeq" id="XP_036013413.1">
    <molecule id="B1AYB6-1"/>
    <property type="nucleotide sequence ID" value="XM_036157520.1"/>
</dbReference>
<dbReference type="SMR" id="B1AYB6"/>
<dbReference type="BioGRID" id="224612">
    <property type="interactions" value="1"/>
</dbReference>
<dbReference type="FunCoup" id="B1AYB6">
    <property type="interactions" value="3377"/>
</dbReference>
<dbReference type="IntAct" id="B1AYB6">
    <property type="interactions" value="1"/>
</dbReference>
<dbReference type="STRING" id="10090.ENSMUSP00000036847"/>
<dbReference type="GlyGen" id="B1AYB6">
    <property type="glycosylation" value="1 site"/>
</dbReference>
<dbReference type="iPTMnet" id="B1AYB6"/>
<dbReference type="PhosphoSitePlus" id="B1AYB6"/>
<dbReference type="ProteomicsDB" id="287319"/>
<dbReference type="ProteomicsDB" id="357161"/>
<dbReference type="Antibodypedia" id="33627">
    <property type="antibodies" value="112 antibodies from 18 providers"/>
</dbReference>
<dbReference type="Ensembl" id="ENSMUST00000112745.8">
    <molecule id="B1AYB6-2"/>
    <property type="protein sequence ID" value="ENSMUSP00000108365.2"/>
    <property type="gene ID" value="ENSMUSG00000036792.13"/>
</dbReference>
<dbReference type="Ensembl" id="ENSMUST00000112754.8">
    <molecule id="B1AYB6-1"/>
    <property type="protein sequence ID" value="ENSMUSP00000108374.2"/>
    <property type="gene ID" value="ENSMUSG00000036792.13"/>
</dbReference>
<dbReference type="GeneID" id="109241"/>
<dbReference type="KEGG" id="mmu:109241"/>
<dbReference type="UCSC" id="uc012bve.1">
    <molecule id="B1AYB6-1"/>
    <property type="organism name" value="mouse"/>
</dbReference>
<dbReference type="AGR" id="MGI:2138934"/>
<dbReference type="CTD" id="55777"/>
<dbReference type="MGI" id="MGI:2138934">
    <property type="gene designation" value="Mbd5"/>
</dbReference>
<dbReference type="VEuPathDB" id="HostDB:ENSMUSG00000036792"/>
<dbReference type="eggNOG" id="ENOG502QTC7">
    <property type="taxonomic scope" value="Eukaryota"/>
</dbReference>
<dbReference type="GeneTree" id="ENSGT00530000064137"/>
<dbReference type="HOGENOM" id="CLU_003105_0_0_1"/>
<dbReference type="InParanoid" id="B1AYB6"/>
<dbReference type="OrthoDB" id="641149at2759"/>
<dbReference type="Reactome" id="R-MMU-5689603">
    <property type="pathway name" value="UCH proteinases"/>
</dbReference>
<dbReference type="BioGRID-ORCS" id="109241">
    <property type="hits" value="2 hits in 51 CRISPR screens"/>
</dbReference>
<dbReference type="ChiTaRS" id="Mbd5">
    <property type="organism name" value="mouse"/>
</dbReference>
<dbReference type="PRO" id="PR:B1AYB6"/>
<dbReference type="Proteomes" id="UP000000589">
    <property type="component" value="Chromosome 2"/>
</dbReference>
<dbReference type="RNAct" id="B1AYB6">
    <property type="molecule type" value="protein"/>
</dbReference>
<dbReference type="Bgee" id="ENSMUSG00000036792">
    <property type="expression patterns" value="Expressed in animal zygote and 223 other cell types or tissues"/>
</dbReference>
<dbReference type="ExpressionAtlas" id="B1AYB6">
    <property type="expression patterns" value="baseline and differential"/>
</dbReference>
<dbReference type="GO" id="GO:0005694">
    <property type="term" value="C:chromosome"/>
    <property type="evidence" value="ECO:0007669"/>
    <property type="project" value="UniProtKB-SubCell"/>
</dbReference>
<dbReference type="GO" id="GO:0030496">
    <property type="term" value="C:midbody"/>
    <property type="evidence" value="ECO:0007669"/>
    <property type="project" value="Ensembl"/>
</dbReference>
<dbReference type="GO" id="GO:0005654">
    <property type="term" value="C:nucleoplasm"/>
    <property type="evidence" value="ECO:0007669"/>
    <property type="project" value="Ensembl"/>
</dbReference>
<dbReference type="GO" id="GO:0003682">
    <property type="term" value="F:chromatin binding"/>
    <property type="evidence" value="ECO:0000250"/>
    <property type="project" value="UniProtKB"/>
</dbReference>
<dbReference type="GO" id="GO:0042593">
    <property type="term" value="P:glucose homeostasis"/>
    <property type="evidence" value="ECO:0000315"/>
    <property type="project" value="MGI"/>
</dbReference>
<dbReference type="GO" id="GO:0060399">
    <property type="term" value="P:positive regulation of growth hormone receptor signaling pathway"/>
    <property type="evidence" value="ECO:0000315"/>
    <property type="project" value="MGI"/>
</dbReference>
<dbReference type="GO" id="GO:0040014">
    <property type="term" value="P:regulation of multicellular organism growth"/>
    <property type="evidence" value="ECO:0000315"/>
    <property type="project" value="MGI"/>
</dbReference>
<dbReference type="CDD" id="cd20141">
    <property type="entry name" value="PWWP_MBD5"/>
    <property type="match status" value="1"/>
</dbReference>
<dbReference type="FunFam" id="2.30.30.140:FF:000035">
    <property type="entry name" value="Methyl-CpG binding domain protein 5"/>
    <property type="match status" value="1"/>
</dbReference>
<dbReference type="Gene3D" id="2.30.30.140">
    <property type="match status" value="1"/>
</dbReference>
<dbReference type="InterPro" id="IPR001739">
    <property type="entry name" value="Methyl_CpG_DNA-bd"/>
</dbReference>
<dbReference type="PANTHER" id="PTHR16112">
    <property type="entry name" value="METHYL-CPG BINDING PROTEIN, DROSOPHILA"/>
    <property type="match status" value="1"/>
</dbReference>
<dbReference type="PANTHER" id="PTHR16112:SF18">
    <property type="entry name" value="METHYL-CPG-BINDING DOMAIN PROTEIN 5"/>
    <property type="match status" value="1"/>
</dbReference>
<dbReference type="SMART" id="SM00391">
    <property type="entry name" value="MBD"/>
    <property type="match status" value="1"/>
</dbReference>
<dbReference type="SUPFAM" id="SSF63748">
    <property type="entry name" value="Tudor/PWWP/MBT"/>
    <property type="match status" value="1"/>
</dbReference>
<dbReference type="PROSITE" id="PS50982">
    <property type="entry name" value="MBD"/>
    <property type="match status" value="1"/>
</dbReference>
<proteinExistence type="evidence at transcript level"/>
<feature type="chain" id="PRO_0000406940" description="Methyl-CpG-binding domain protein 5">
    <location>
        <begin position="1"/>
        <end position="1498"/>
    </location>
</feature>
<feature type="domain" description="MBD" evidence="3">
    <location>
        <begin position="11"/>
        <end position="81"/>
    </location>
</feature>
<feature type="domain" description="PWWP" evidence="2">
    <location>
        <begin position="1385"/>
        <end position="1409"/>
    </location>
</feature>
<feature type="region of interest" description="Required for interaction with ASXL1/2/3" evidence="1">
    <location>
        <begin position="57"/>
        <end position="68"/>
    </location>
</feature>
<feature type="region of interest" description="Disordered" evidence="4">
    <location>
        <begin position="199"/>
        <end position="274"/>
    </location>
</feature>
<feature type="region of interest" description="Disordered" evidence="4">
    <location>
        <begin position="329"/>
        <end position="350"/>
    </location>
</feature>
<feature type="region of interest" description="Disordered" evidence="4">
    <location>
        <begin position="452"/>
        <end position="521"/>
    </location>
</feature>
<feature type="region of interest" description="Disordered" evidence="4">
    <location>
        <begin position="594"/>
        <end position="642"/>
    </location>
</feature>
<feature type="region of interest" description="Disordered" evidence="4">
    <location>
        <begin position="1350"/>
        <end position="1377"/>
    </location>
</feature>
<feature type="region of interest" description="Disordered" evidence="4">
    <location>
        <begin position="1473"/>
        <end position="1498"/>
    </location>
</feature>
<feature type="compositionally biased region" description="Pro residues" evidence="4">
    <location>
        <begin position="333"/>
        <end position="343"/>
    </location>
</feature>
<feature type="compositionally biased region" description="Low complexity" evidence="4">
    <location>
        <begin position="499"/>
        <end position="511"/>
    </location>
</feature>
<feature type="compositionally biased region" description="Low complexity" evidence="4">
    <location>
        <begin position="594"/>
        <end position="613"/>
    </location>
</feature>
<feature type="compositionally biased region" description="Polar residues" evidence="4">
    <location>
        <begin position="614"/>
        <end position="624"/>
    </location>
</feature>
<feature type="compositionally biased region" description="Basic residues" evidence="4">
    <location>
        <begin position="1487"/>
        <end position="1498"/>
    </location>
</feature>
<feature type="splice variant" id="VSP_062349" description="In isoform 2.">
    <original>GSSLPSSIAIA</original>
    <variation>MILLEKSTQRY</variation>
    <location>
        <begin position="846"/>
        <end position="856"/>
    </location>
</feature>
<feature type="splice variant" id="VSP_062350" description="In isoform 2.">
    <location>
        <begin position="857"/>
        <end position="1498"/>
    </location>
</feature>
<comment type="function">
    <text evidence="1">Non-catalytic component of the polycomb repressive deubiquitinase (PR-DUB) complex, a complex that specifically mediates deubiquitination of histone H2A monoubiquitinated at 'Lys-120' (H2AK119ub1). Important for stability of PR-DUB components and stimulating its ubiquitinase activity. As part of the PR-DUB complex, associates with chromatin enriched in histone marks H3K4me1, H3K4me3, and H3K27Ac, but not in H3K27me3. The PR-DUB complex is an epigenetic regulator of gene expression, including genes involved in cell growth and survivability. MBD5 and MBD6 containing complexes associate with distinct chromatin regions enriched in genes involved in different pathways. Heterochromatin recruitment is not mediated by DNA methylation. The PR-DUB complex is an epigenetic regulator of gene expression, including genes involved in development, cell communication, signaling, cell proliferation and cell viability.</text>
</comment>
<comment type="subunit">
    <text evidence="1">Core component of the polycomb repressive deubiquitinase (PR-DUB) complex, at least composed of BAP1, one of ASXL1, ASXL2 or (probably) ASXL3, and one of MBD5 or MBD6. Distinct combinations of ASXL and MBD proteins may preferentially bind specific histone modification marks. The PR-DUB core associates with a number of accessory proteins, including FOXK1, FOXK2, KDM1B, HCFC1 and OGT; KDM1B specifically associates with ASXL2 PR-DUB complexes. Interacts (via MBD domain) with ASXL1, ASXL2 and ASXL3 (via PHD domain); the interaction is probably direct, mediates association with other PR-DUB complex core components.</text>
</comment>
<comment type="subcellular location">
    <molecule>Isoform 1</molecule>
    <subcellularLocation>
        <location evidence="1">Nucleus</location>
    </subcellularLocation>
    <subcellularLocation>
        <location evidence="1">Chromosome</location>
    </subcellularLocation>
    <text evidence="1">Associates with heterochromatin containing chromocentres in a DNA methylation-independent manner. Does not localize to sites of DNA damage.</text>
</comment>
<comment type="subcellular location">
    <molecule>Isoform 2</molecule>
    <subcellularLocation>
        <location evidence="1">Nucleus</location>
    </subcellularLocation>
    <text evidence="1">Does not associate with heterochromatin containing chromocentres. Does not localize to sites of DNA damage.</text>
</comment>
<comment type="alternative products">
    <event type="alternative splicing"/>
    <isoform>
        <id>B1AYB6-1</id>
        <name evidence="6">1</name>
        <sequence type="displayed"/>
    </isoform>
    <isoform>
        <id>B1AYB6-2</id>
        <name evidence="6">2</name>
        <sequence type="described" ref="VSP_062349 VSP_062350"/>
    </isoform>
</comment>
<comment type="tissue specificity">
    <molecule>Isoform 1</molecule>
    <text evidence="5">Expressed at highest levels in adult testis and Brain.</text>
</comment>
<comment type="tissue specificity">
    <molecule>Isoform 2</molecule>
    <text evidence="5">Expressed at highest levels in the oocyte.</text>
</comment>
<comment type="developmental stage">
    <text evidence="5">Expressed in embryo at 7, 11, 15 and 17 dpc.</text>
</comment>
<comment type="domain">
    <molecule>Isoform 1</molecule>
    <text evidence="1">Possesses a methyl-binding domain (MBD) and a Pro-Trp-Trp-Pro (PWWP) domain (By similarity). Both MBD and PWWP domains are necessary for chromocentric localization (By similarity).</text>
</comment>
<comment type="domain">
    <molecule>Isoform 2</molecule>
    <text evidence="1">Possesses a methyl-binding domain (MBD) but lacks the Pro-Trp-Trp-Pro (PWWP) domain.</text>
</comment>
<comment type="domain">
    <text evidence="1">The MBD may lack methyl-binding activity.</text>
</comment>
<comment type="miscellaneous">
    <text evidence="7">Named 'methyl-CpG-binding domain protein' for homology to other methyl-CpG-binding domain proteins and the presence of an MBD domain, MBD5 and MBD6 may have evolutionarily lost the ability to bind methylated DNA and are recruited to heterochromatin by alternative signals.</text>
</comment>